<reference key="1">
    <citation type="journal article" date="2011" name="J. Bacteriol.">
        <title>Comparative genomics of 28 Salmonella enterica isolates: evidence for CRISPR-mediated adaptive sublineage evolution.</title>
        <authorList>
            <person name="Fricke W.F."/>
            <person name="Mammel M.K."/>
            <person name="McDermott P.F."/>
            <person name="Tartera C."/>
            <person name="White D.G."/>
            <person name="Leclerc J.E."/>
            <person name="Ravel J."/>
            <person name="Cebula T.A."/>
        </authorList>
    </citation>
    <scope>NUCLEOTIDE SEQUENCE [LARGE SCALE GENOMIC DNA]</scope>
    <source>
        <strain>SL254</strain>
    </source>
</reference>
<name>RAPA_SALNS</name>
<keyword id="KW-0010">Activator</keyword>
<keyword id="KW-0067">ATP-binding</keyword>
<keyword id="KW-0238">DNA-binding</keyword>
<keyword id="KW-0347">Helicase</keyword>
<keyword id="KW-0378">Hydrolase</keyword>
<keyword id="KW-0547">Nucleotide-binding</keyword>
<keyword id="KW-0804">Transcription</keyword>
<keyword id="KW-0805">Transcription regulation</keyword>
<comment type="function">
    <text evidence="1">Transcription regulator that activates transcription by stimulating RNA polymerase (RNAP) recycling in case of stress conditions such as supercoiled DNA or high salt concentrations. Probably acts by releasing the RNAP, when it is trapped or immobilized on tightly supercoiled DNA. Does not activate transcription on linear DNA. Probably not involved in DNA repair.</text>
</comment>
<comment type="subunit">
    <text evidence="1">Interacts with the RNAP. Has a higher affinity for the core RNAP than for the holoenzyme. Its ATPase activity is stimulated by binding to RNAP.</text>
</comment>
<comment type="similarity">
    <text evidence="1">Belongs to the SNF2/RAD54 helicase family. RapA subfamily.</text>
</comment>
<evidence type="ECO:0000255" key="1">
    <source>
        <dbReference type="HAMAP-Rule" id="MF_01821"/>
    </source>
</evidence>
<protein>
    <recommendedName>
        <fullName evidence="1">RNA polymerase-associated protein RapA</fullName>
        <ecNumber evidence="1">3.6.4.-</ecNumber>
    </recommendedName>
    <alternativeName>
        <fullName evidence="1">ATP-dependent helicase HepA</fullName>
    </alternativeName>
</protein>
<accession>B4SU17</accession>
<sequence>MPFTLGQRWISDTESELGLGTVVAMDARTVTLLFPSTGENRLYARSDSPVTRVMFNPGDTITSHEGWQLHIDEVKEENGLLVYVGTRLDTEETNVTLREVLLDSKLVFSKPQDRLFAGQIDRMDRFALRYRARKFQSEQYRMPYSGLRGQRTNLIPHQLNIAHDVGRRHAPRVLLADEVGLGKTIEAGMILHQQLLSGAAERVLIIVPETLQHQWLVEMLRRFNLRFALFDDERYTEAQHDAYNPFETEQLVICSLDFARRNKQRLEHLCDAEWDLLVVDEAHHLVWSTDAPSREYMAIEQLAERVPGVLLLTATPEQLGMESHFARLRLLDPNRFHDFEQFVEEQKNYRPVADAVAMLLAGNKLSNDELNRLGDLIGEQDIEPLLQAANSDRDDAQAARDELVSMLMDRHGTSRVLFRNTRNGVKGFPKRELHTVKLPLPTQYQTAIKVSGIMGARKSAEDRARDMLYPEQIYQEFEGDTGTWWNFDPRVEWLMGYLTSHRSQKVLVICAKATTALQLEQVLREREGIRAAVFHEGMSIIERDRAAAWFAEEDTGAQVLLCSEIGSEGRNFQFASNLVMFDLPFNPDLLEQRIGRLDRIGQAHDIQIHVPYLEKTAQSVLVRWYHEGLDAFEHTCPTGRAIYDSAYASLINYLAAPEETDGFDDLIKSCREQHEALKAQLEQGRDRLLEIHSNGGEKAQQLAQSIEEQDDDTNLIAFAMNLFDIVGINQDDRGDNLIVLTPSDHMLVPDFPGLPEDGCTITFERDVALSREDAQFITWEHPLIRNGLDLILSGDTGSSTISLLKNKALPVGTLLVELVYVVEAQAPKQLQLNRFLPPTPVRMLLDKNGNNLAAQVEFETFNRQLSAVNRHTGSKLVNAVQQDVYAILQLGETQIEQSARALIDNARREADEKLSGELSRLEALRAVNPNIRDDELAAIDSNRQQVLESLNQAGWRLDALRLIVVTHQ</sequence>
<organism>
    <name type="scientific">Salmonella newport (strain SL254)</name>
    <dbReference type="NCBI Taxonomy" id="423368"/>
    <lineage>
        <taxon>Bacteria</taxon>
        <taxon>Pseudomonadati</taxon>
        <taxon>Pseudomonadota</taxon>
        <taxon>Gammaproteobacteria</taxon>
        <taxon>Enterobacterales</taxon>
        <taxon>Enterobacteriaceae</taxon>
        <taxon>Salmonella</taxon>
    </lineage>
</organism>
<dbReference type="EC" id="3.6.4.-" evidence="1"/>
<dbReference type="EMBL" id="CP001113">
    <property type="protein sequence ID" value="ACF65016.1"/>
    <property type="molecule type" value="Genomic_DNA"/>
</dbReference>
<dbReference type="RefSeq" id="WP_001116970.1">
    <property type="nucleotide sequence ID" value="NZ_CCMR01000003.1"/>
</dbReference>
<dbReference type="SMR" id="B4SU17"/>
<dbReference type="KEGG" id="see:SNSL254_A0102"/>
<dbReference type="HOGENOM" id="CLU_011520_0_0_6"/>
<dbReference type="Proteomes" id="UP000008824">
    <property type="component" value="Chromosome"/>
</dbReference>
<dbReference type="GO" id="GO:0005524">
    <property type="term" value="F:ATP binding"/>
    <property type="evidence" value="ECO:0007669"/>
    <property type="project" value="UniProtKB-UniRule"/>
</dbReference>
<dbReference type="GO" id="GO:0003677">
    <property type="term" value="F:DNA binding"/>
    <property type="evidence" value="ECO:0007669"/>
    <property type="project" value="UniProtKB-KW"/>
</dbReference>
<dbReference type="GO" id="GO:0004386">
    <property type="term" value="F:helicase activity"/>
    <property type="evidence" value="ECO:0007669"/>
    <property type="project" value="UniProtKB-UniRule"/>
</dbReference>
<dbReference type="GO" id="GO:0016817">
    <property type="term" value="F:hydrolase activity, acting on acid anhydrides"/>
    <property type="evidence" value="ECO:0007669"/>
    <property type="project" value="InterPro"/>
</dbReference>
<dbReference type="GO" id="GO:0006355">
    <property type="term" value="P:regulation of DNA-templated transcription"/>
    <property type="evidence" value="ECO:0007669"/>
    <property type="project" value="UniProtKB-UniRule"/>
</dbReference>
<dbReference type="CDD" id="cd18011">
    <property type="entry name" value="DEXDc_RapA"/>
    <property type="match status" value="1"/>
</dbReference>
<dbReference type="CDD" id="cd18793">
    <property type="entry name" value="SF2_C_SNF"/>
    <property type="match status" value="1"/>
</dbReference>
<dbReference type="FunFam" id="2.30.30.140:FF:000020">
    <property type="entry name" value="RNA polymerase-associated protein RapA"/>
    <property type="match status" value="1"/>
</dbReference>
<dbReference type="FunFam" id="3.30.360.80:FF:000001">
    <property type="entry name" value="RNA polymerase-associated protein RapA"/>
    <property type="match status" value="1"/>
</dbReference>
<dbReference type="FunFam" id="3.40.50.10810:FF:000012">
    <property type="entry name" value="RNA polymerase-associated protein RapA"/>
    <property type="match status" value="1"/>
</dbReference>
<dbReference type="FunFam" id="3.40.50.300:FF:000350">
    <property type="entry name" value="RNA polymerase-associated protein RapA"/>
    <property type="match status" value="1"/>
</dbReference>
<dbReference type="Gene3D" id="2.30.30.140">
    <property type="match status" value="1"/>
</dbReference>
<dbReference type="Gene3D" id="2.30.30.930">
    <property type="match status" value="1"/>
</dbReference>
<dbReference type="Gene3D" id="3.30.360.80">
    <property type="match status" value="1"/>
</dbReference>
<dbReference type="Gene3D" id="6.10.140.1500">
    <property type="match status" value="1"/>
</dbReference>
<dbReference type="Gene3D" id="6.10.140.2230">
    <property type="match status" value="1"/>
</dbReference>
<dbReference type="Gene3D" id="3.40.50.300">
    <property type="entry name" value="P-loop containing nucleotide triphosphate hydrolases"/>
    <property type="match status" value="1"/>
</dbReference>
<dbReference type="Gene3D" id="3.40.50.10810">
    <property type="entry name" value="Tandem AAA-ATPase domain"/>
    <property type="match status" value="1"/>
</dbReference>
<dbReference type="HAMAP" id="MF_01821">
    <property type="entry name" value="Helicase_RapA"/>
    <property type="match status" value="1"/>
</dbReference>
<dbReference type="InterPro" id="IPR014001">
    <property type="entry name" value="Helicase_ATP-bd"/>
</dbReference>
<dbReference type="InterPro" id="IPR001650">
    <property type="entry name" value="Helicase_C-like"/>
</dbReference>
<dbReference type="InterPro" id="IPR023949">
    <property type="entry name" value="Helicase_RapA"/>
</dbReference>
<dbReference type="InterPro" id="IPR027417">
    <property type="entry name" value="P-loop_NTPase"/>
</dbReference>
<dbReference type="InterPro" id="IPR022737">
    <property type="entry name" value="RapA_C"/>
</dbReference>
<dbReference type="InterPro" id="IPR038718">
    <property type="entry name" value="SNF2-like_sf"/>
</dbReference>
<dbReference type="InterPro" id="IPR049730">
    <property type="entry name" value="SNF2/RAD54-like_C"/>
</dbReference>
<dbReference type="InterPro" id="IPR000330">
    <property type="entry name" value="SNF2_N"/>
</dbReference>
<dbReference type="InterPro" id="IPR040765">
    <property type="entry name" value="Tudor_1_RapA"/>
</dbReference>
<dbReference type="InterPro" id="IPR040766">
    <property type="entry name" value="Tudor_2_RapA"/>
</dbReference>
<dbReference type="NCBIfam" id="NF003426">
    <property type="entry name" value="PRK04914.1"/>
    <property type="match status" value="1"/>
</dbReference>
<dbReference type="PANTHER" id="PTHR45766">
    <property type="entry name" value="DNA ANNEALING HELICASE AND ENDONUCLEASE ZRANB3 FAMILY MEMBER"/>
    <property type="match status" value="1"/>
</dbReference>
<dbReference type="PANTHER" id="PTHR45766:SF6">
    <property type="entry name" value="SWI_SNF-RELATED MATRIX-ASSOCIATED ACTIN-DEPENDENT REGULATOR OF CHROMATIN SUBFAMILY A-LIKE PROTEIN 1"/>
    <property type="match status" value="1"/>
</dbReference>
<dbReference type="Pfam" id="PF00271">
    <property type="entry name" value="Helicase_C"/>
    <property type="match status" value="1"/>
</dbReference>
<dbReference type="Pfam" id="PF12137">
    <property type="entry name" value="RapA_C"/>
    <property type="match status" value="1"/>
</dbReference>
<dbReference type="Pfam" id="PF00176">
    <property type="entry name" value="SNF2-rel_dom"/>
    <property type="match status" value="1"/>
</dbReference>
<dbReference type="Pfam" id="PF18339">
    <property type="entry name" value="Tudor_1_RapA"/>
    <property type="match status" value="1"/>
</dbReference>
<dbReference type="Pfam" id="PF18337">
    <property type="entry name" value="Tudor_RapA"/>
    <property type="match status" value="1"/>
</dbReference>
<dbReference type="SMART" id="SM00487">
    <property type="entry name" value="DEXDc"/>
    <property type="match status" value="1"/>
</dbReference>
<dbReference type="SMART" id="SM00490">
    <property type="entry name" value="HELICc"/>
    <property type="match status" value="1"/>
</dbReference>
<dbReference type="SUPFAM" id="SSF52540">
    <property type="entry name" value="P-loop containing nucleoside triphosphate hydrolases"/>
    <property type="match status" value="2"/>
</dbReference>
<dbReference type="PROSITE" id="PS51192">
    <property type="entry name" value="HELICASE_ATP_BIND_1"/>
    <property type="match status" value="1"/>
</dbReference>
<dbReference type="PROSITE" id="PS51194">
    <property type="entry name" value="HELICASE_CTER"/>
    <property type="match status" value="1"/>
</dbReference>
<proteinExistence type="inferred from homology"/>
<gene>
    <name evidence="1" type="primary">rapA</name>
    <name type="ordered locus">SNSL254_A0102</name>
</gene>
<feature type="chain" id="PRO_1000188186" description="RNA polymerase-associated protein RapA">
    <location>
        <begin position="1"/>
        <end position="968"/>
    </location>
</feature>
<feature type="domain" description="Helicase ATP-binding" evidence="1">
    <location>
        <begin position="164"/>
        <end position="334"/>
    </location>
</feature>
<feature type="domain" description="Helicase C-terminal" evidence="1">
    <location>
        <begin position="490"/>
        <end position="685"/>
    </location>
</feature>
<feature type="short sequence motif" description="DEAH box">
    <location>
        <begin position="280"/>
        <end position="283"/>
    </location>
</feature>
<feature type="binding site" evidence="1">
    <location>
        <begin position="177"/>
        <end position="184"/>
    </location>
    <ligand>
        <name>ATP</name>
        <dbReference type="ChEBI" id="CHEBI:30616"/>
    </ligand>
</feature>